<reference key="1">
    <citation type="submission" date="1997-10" db="EMBL/GenBank/DDBJ databases">
        <title>Evidence for the secreted protein MPT51 from Mycobacterium tuberculosis is a T-cell antigen.</title>
        <authorList>
            <person name="Oettinger T."/>
            <person name="Andersen P."/>
        </authorList>
    </citation>
    <scope>NUCLEOTIDE SEQUENCE [GENOMIC DNA]</scope>
    <source>
        <strain>ATCC 25618 / H37Rv</strain>
    </source>
</reference>
<reference key="2">
    <citation type="journal article" date="1998" name="Nature">
        <title>Deciphering the biology of Mycobacterium tuberculosis from the complete genome sequence.</title>
        <authorList>
            <person name="Cole S.T."/>
            <person name="Brosch R."/>
            <person name="Parkhill J."/>
            <person name="Garnier T."/>
            <person name="Churcher C.M."/>
            <person name="Harris D.E."/>
            <person name="Gordon S.V."/>
            <person name="Eiglmeier K."/>
            <person name="Gas S."/>
            <person name="Barry C.E. III"/>
            <person name="Tekaia F."/>
            <person name="Badcock K."/>
            <person name="Basham D."/>
            <person name="Brown D."/>
            <person name="Chillingworth T."/>
            <person name="Connor R."/>
            <person name="Davies R.M."/>
            <person name="Devlin K."/>
            <person name="Feltwell T."/>
            <person name="Gentles S."/>
            <person name="Hamlin N."/>
            <person name="Holroyd S."/>
            <person name="Hornsby T."/>
            <person name="Jagels K."/>
            <person name="Krogh A."/>
            <person name="McLean J."/>
            <person name="Moule S."/>
            <person name="Murphy L.D."/>
            <person name="Oliver S."/>
            <person name="Osborne J."/>
            <person name="Quail M.A."/>
            <person name="Rajandream M.A."/>
            <person name="Rogers J."/>
            <person name="Rutter S."/>
            <person name="Seeger K."/>
            <person name="Skelton S."/>
            <person name="Squares S."/>
            <person name="Squares R."/>
            <person name="Sulston J.E."/>
            <person name="Taylor K."/>
            <person name="Whitehead S."/>
            <person name="Barrell B.G."/>
        </authorList>
    </citation>
    <scope>NUCLEOTIDE SEQUENCE [LARGE SCALE GENOMIC DNA]</scope>
    <source>
        <strain>ATCC 25618 / H37Rv</strain>
    </source>
</reference>
<reference key="3">
    <citation type="journal article" date="2011" name="Mol. Cell. Proteomics">
        <title>Proteogenomic analysis of Mycobacterium tuberculosis by high resolution mass spectrometry.</title>
        <authorList>
            <person name="Kelkar D.S."/>
            <person name="Kumar D."/>
            <person name="Kumar P."/>
            <person name="Balakrishnan L."/>
            <person name="Muthusamy B."/>
            <person name="Yadav A.K."/>
            <person name="Shrivastava P."/>
            <person name="Marimuthu A."/>
            <person name="Anand S."/>
            <person name="Sundaram H."/>
            <person name="Kingsbury R."/>
            <person name="Harsha H.C."/>
            <person name="Nair B."/>
            <person name="Prasad T.S."/>
            <person name="Chauhan D.S."/>
            <person name="Katoch K."/>
            <person name="Katoch V.M."/>
            <person name="Kumar P."/>
            <person name="Chaerkady R."/>
            <person name="Ramachandran S."/>
            <person name="Dash D."/>
            <person name="Pandey A."/>
        </authorList>
    </citation>
    <scope>IDENTIFICATION BY MASS SPECTROMETRY [LARGE SCALE ANALYSIS]</scope>
    <source>
        <strain>ATCC 25618 / H37Rv</strain>
    </source>
</reference>
<reference key="4">
    <citation type="journal article" date="2004" name="J. Mol. Biol.">
        <title>The structure of Mycobacterium tuberculosis MPT51 (FbpC1) defines a new family of non-catalytic alpha/beta hydrolases.</title>
        <authorList>
            <person name="Wilson R.A."/>
            <person name="Maughan W.N."/>
            <person name="Kremer L."/>
            <person name="Besra G.S."/>
            <person name="Fuetterer K."/>
        </authorList>
    </citation>
    <scope>X-RAY CRYSTALLOGRAPHY (1.71 ANGSTROMS) OF 27-299</scope>
    <scope>FUNCTION</scope>
    <scope>SUBUNIT</scope>
</reference>
<gene>
    <name type="primary">mpt51</name>
    <name type="synonym">fbpC1</name>
    <name type="synonym">fbpD</name>
    <name type="synonym">mpb51</name>
    <name type="ordered locus">Rv3803c</name>
    <name type="ORF">MTV026.08c</name>
</gene>
<sequence>MKGRSALLRALWIAALSFGLGGVAVAAEPTAKAAPYENLMVPSPSMGRDIPVAFLAGGPHAVYLLDAFNAGPDVSNWVTAGNAMNTLAGKGISVVAPAGGAYSMYTNWEQDGSKQWDTFLSAELPDWLAANRGLAPGGHAAVGAAQGGYGAMALAAFHPDRFGFAGSMSGFLYPSNTTTNGAIAAGMQQFGGVDTNGMWGAPQLGRWKWHDPWVHASLLAQNNTRVWVWSPTNPGASDPAAMIGQAAEAMGNSRMFYNQYRSVGGHNGHFDFPASGDNGWGSWAPQLGAMSGDIVGAIR</sequence>
<accession>P9WQN7</accession>
<accession>L0TFA7</accession>
<accession>O33176</accession>
<accession>P0A4V6</accession>
<accession>Q48923</accession>
<protein>
    <recommendedName>
        <fullName>MPT51/MPB51 antigen</fullName>
    </recommendedName>
</protein>
<feature type="signal peptide" evidence="1">
    <location>
        <begin position="1"/>
        <end position="26"/>
    </location>
</feature>
<feature type="chain" id="PRO_0000000230" description="MPT51/MPB51 antigen">
    <location>
        <begin position="27"/>
        <end position="299"/>
    </location>
</feature>
<feature type="sequence conflict" description="In Ref. 1; CAA05211." evidence="3" ref="1">
    <original>A</original>
    <variation>T</variation>
    <location>
        <position position="246"/>
    </location>
</feature>
<feature type="strand" evidence="4">
    <location>
        <begin position="37"/>
        <end position="43"/>
    </location>
</feature>
<feature type="turn" evidence="4">
    <location>
        <begin position="44"/>
        <end position="47"/>
    </location>
</feature>
<feature type="strand" evidence="4">
    <location>
        <begin position="48"/>
        <end position="55"/>
    </location>
</feature>
<feature type="strand" evidence="4">
    <location>
        <begin position="58"/>
        <end position="65"/>
    </location>
</feature>
<feature type="strand" evidence="4">
    <location>
        <begin position="72"/>
        <end position="74"/>
    </location>
</feature>
<feature type="helix" evidence="4">
    <location>
        <begin position="76"/>
        <end position="79"/>
    </location>
</feature>
<feature type="helix" evidence="4">
    <location>
        <begin position="83"/>
        <end position="87"/>
    </location>
</feature>
<feature type="strand" evidence="4">
    <location>
        <begin position="90"/>
        <end position="97"/>
    </location>
</feature>
<feature type="helix" evidence="4">
    <location>
        <begin position="116"/>
        <end position="121"/>
    </location>
</feature>
<feature type="helix" evidence="4">
    <location>
        <begin position="123"/>
        <end position="131"/>
    </location>
</feature>
<feature type="strand" evidence="4">
    <location>
        <begin position="139"/>
        <end position="144"/>
    </location>
</feature>
<feature type="helix" evidence="4">
    <location>
        <begin position="146"/>
        <end position="157"/>
    </location>
</feature>
<feature type="turn" evidence="4">
    <location>
        <begin position="159"/>
        <end position="161"/>
    </location>
</feature>
<feature type="strand" evidence="4">
    <location>
        <begin position="162"/>
        <end position="169"/>
    </location>
</feature>
<feature type="helix" evidence="4">
    <location>
        <begin position="177"/>
        <end position="191"/>
    </location>
</feature>
<feature type="helix" evidence="4">
    <location>
        <begin position="196"/>
        <end position="199"/>
    </location>
</feature>
<feature type="helix" evidence="4">
    <location>
        <begin position="202"/>
        <end position="204"/>
    </location>
</feature>
<feature type="helix" evidence="4">
    <location>
        <begin position="208"/>
        <end position="210"/>
    </location>
</feature>
<feature type="turn" evidence="4">
    <location>
        <begin position="212"/>
        <end position="215"/>
    </location>
</feature>
<feature type="helix" evidence="4">
    <location>
        <begin position="216"/>
        <end position="221"/>
    </location>
</feature>
<feature type="strand" evidence="4">
    <location>
        <begin position="225"/>
        <end position="229"/>
    </location>
</feature>
<feature type="helix" evidence="4">
    <location>
        <begin position="239"/>
        <end position="242"/>
    </location>
</feature>
<feature type="helix" evidence="4">
    <location>
        <begin position="246"/>
        <end position="262"/>
    </location>
</feature>
<feature type="strand" evidence="4">
    <location>
        <begin position="267"/>
        <end position="271"/>
    </location>
</feature>
<feature type="helix" evidence="4">
    <location>
        <begin position="280"/>
        <end position="298"/>
    </location>
</feature>
<proteinExistence type="evidence at protein level"/>
<evidence type="ECO:0000255" key="1"/>
<evidence type="ECO:0000269" key="2">
    <source>
    </source>
</evidence>
<evidence type="ECO:0000305" key="3"/>
<evidence type="ECO:0007829" key="4">
    <source>
        <dbReference type="PDB" id="1R88"/>
    </source>
</evidence>
<organism>
    <name type="scientific">Mycobacterium tuberculosis (strain ATCC 25618 / H37Rv)</name>
    <dbReference type="NCBI Taxonomy" id="83332"/>
    <lineage>
        <taxon>Bacteria</taxon>
        <taxon>Bacillati</taxon>
        <taxon>Actinomycetota</taxon>
        <taxon>Actinomycetes</taxon>
        <taxon>Mycobacteriales</taxon>
        <taxon>Mycobacteriaceae</taxon>
        <taxon>Mycobacterium</taxon>
        <taxon>Mycobacterium tuberculosis complex</taxon>
    </lineage>
</organism>
<name>MPT51_MYCTU</name>
<comment type="function">
    <text evidence="2">May have a role in host tissue attachment, whereby ligands may include the serum protein fibronectin and small sugars.</text>
</comment>
<comment type="subunit">
    <text evidence="2">Homodimer.</text>
</comment>
<comment type="subcellular location">
    <subcellularLocation>
        <location>Secreted</location>
    </subcellularLocation>
</comment>
<comment type="similarity">
    <text evidence="3">Belongs to the mycobacterial A85 antigen family.</text>
</comment>
<keyword id="KW-0002">3D-structure</keyword>
<keyword id="KW-0012">Acyltransferase</keyword>
<keyword id="KW-1185">Reference proteome</keyword>
<keyword id="KW-0964">Secreted</keyword>
<keyword id="KW-0732">Signal</keyword>
<keyword id="KW-0808">Transferase</keyword>
<dbReference type="EMBL" id="AJ002150">
    <property type="protein sequence ID" value="CAA05211.1"/>
    <property type="molecule type" value="Genomic_DNA"/>
</dbReference>
<dbReference type="EMBL" id="AL123456">
    <property type="protein sequence ID" value="CCP46632.1"/>
    <property type="molecule type" value="Genomic_DNA"/>
</dbReference>
<dbReference type="PIR" id="G70887">
    <property type="entry name" value="G70887"/>
</dbReference>
<dbReference type="RefSeq" id="WP_003420783.1">
    <property type="nucleotide sequence ID" value="NZ_NVQJ01000022.1"/>
</dbReference>
<dbReference type="RefSeq" id="YP_178017.1">
    <property type="nucleotide sequence ID" value="NC_000962.3"/>
</dbReference>
<dbReference type="PDB" id="1R88">
    <property type="method" value="X-ray"/>
    <property type="resolution" value="1.71 A"/>
    <property type="chains" value="A/B=27-299"/>
</dbReference>
<dbReference type="PDBsum" id="1R88"/>
<dbReference type="SMR" id="P9WQN7"/>
<dbReference type="STRING" id="83332.Rv3803c"/>
<dbReference type="ESTHER" id="myctu-mpt51">
    <property type="family name" value="A85-Mycolyl-transferase"/>
</dbReference>
<dbReference type="PaxDb" id="83332-Rv3803c"/>
<dbReference type="GeneID" id="886121"/>
<dbReference type="KEGG" id="mtu:Rv3803c"/>
<dbReference type="KEGG" id="mtv:RVBD_3803c"/>
<dbReference type="TubercuList" id="Rv3803c"/>
<dbReference type="eggNOG" id="COG0627">
    <property type="taxonomic scope" value="Bacteria"/>
</dbReference>
<dbReference type="InParanoid" id="P9WQN7"/>
<dbReference type="OrthoDB" id="4366784at2"/>
<dbReference type="PhylomeDB" id="P9WQN7"/>
<dbReference type="EvolutionaryTrace" id="P9WQN7"/>
<dbReference type="Proteomes" id="UP000001584">
    <property type="component" value="Chromosome"/>
</dbReference>
<dbReference type="GO" id="GO:0005576">
    <property type="term" value="C:extracellular region"/>
    <property type="evidence" value="ECO:0007005"/>
    <property type="project" value="MTBBASE"/>
</dbReference>
<dbReference type="GO" id="GO:0016747">
    <property type="term" value="F:acyltransferase activity, transferring groups other than amino-acyl groups"/>
    <property type="evidence" value="ECO:0000318"/>
    <property type="project" value="GO_Central"/>
</dbReference>
<dbReference type="GO" id="GO:0001968">
    <property type="term" value="F:fibronectin binding"/>
    <property type="evidence" value="ECO:0000314"/>
    <property type="project" value="CAFA"/>
</dbReference>
<dbReference type="GO" id="GO:0035375">
    <property type="term" value="F:zymogen binding"/>
    <property type="evidence" value="ECO:0000353"/>
    <property type="project" value="CAFA"/>
</dbReference>
<dbReference type="FunFam" id="3.40.50.1820:FF:000086">
    <property type="entry name" value="Diacylglycerol acyltransferase/mycolyltransferase Ag85C"/>
    <property type="match status" value="1"/>
</dbReference>
<dbReference type="Gene3D" id="3.40.50.1820">
    <property type="entry name" value="alpha/beta hydrolase"/>
    <property type="match status" value="1"/>
</dbReference>
<dbReference type="InterPro" id="IPR029058">
    <property type="entry name" value="AB_hydrolase_fold"/>
</dbReference>
<dbReference type="InterPro" id="IPR000801">
    <property type="entry name" value="Esterase-like"/>
</dbReference>
<dbReference type="InterPro" id="IPR050583">
    <property type="entry name" value="Mycobacterial_A85_antigen"/>
</dbReference>
<dbReference type="PANTHER" id="PTHR48098:SF1">
    <property type="entry name" value="DIACYLGLYCEROL ACYLTRANSFERASE_MYCOLYLTRANSFERASE AG85A"/>
    <property type="match status" value="1"/>
</dbReference>
<dbReference type="PANTHER" id="PTHR48098">
    <property type="entry name" value="ENTEROCHELIN ESTERASE-RELATED"/>
    <property type="match status" value="1"/>
</dbReference>
<dbReference type="Pfam" id="PF00756">
    <property type="entry name" value="Esterase"/>
    <property type="match status" value="1"/>
</dbReference>
<dbReference type="SUPFAM" id="SSF53474">
    <property type="entry name" value="alpha/beta-Hydrolases"/>
    <property type="match status" value="1"/>
</dbReference>